<proteinExistence type="inferred from homology"/>
<accession>Q7MYC1</accession>
<dbReference type="EMBL" id="BX571874">
    <property type="protein sequence ID" value="CAE17135.1"/>
    <property type="molecule type" value="Genomic_DNA"/>
</dbReference>
<dbReference type="RefSeq" id="WP_011148828.1">
    <property type="nucleotide sequence ID" value="NC_005126.1"/>
</dbReference>
<dbReference type="SMR" id="Q7MYC1"/>
<dbReference type="STRING" id="243265.plu4763"/>
<dbReference type="GeneID" id="48850996"/>
<dbReference type="KEGG" id="plu:plu4763"/>
<dbReference type="eggNOG" id="COG1220">
    <property type="taxonomic scope" value="Bacteria"/>
</dbReference>
<dbReference type="HOGENOM" id="CLU_033123_0_0_6"/>
<dbReference type="OrthoDB" id="9804062at2"/>
<dbReference type="Proteomes" id="UP000002514">
    <property type="component" value="Chromosome"/>
</dbReference>
<dbReference type="GO" id="GO:0009376">
    <property type="term" value="C:HslUV protease complex"/>
    <property type="evidence" value="ECO:0007669"/>
    <property type="project" value="UniProtKB-UniRule"/>
</dbReference>
<dbReference type="GO" id="GO:0005524">
    <property type="term" value="F:ATP binding"/>
    <property type="evidence" value="ECO:0007669"/>
    <property type="project" value="UniProtKB-UniRule"/>
</dbReference>
<dbReference type="GO" id="GO:0016887">
    <property type="term" value="F:ATP hydrolysis activity"/>
    <property type="evidence" value="ECO:0007669"/>
    <property type="project" value="InterPro"/>
</dbReference>
<dbReference type="GO" id="GO:0008233">
    <property type="term" value="F:peptidase activity"/>
    <property type="evidence" value="ECO:0007669"/>
    <property type="project" value="InterPro"/>
</dbReference>
<dbReference type="GO" id="GO:0036402">
    <property type="term" value="F:proteasome-activating activity"/>
    <property type="evidence" value="ECO:0007669"/>
    <property type="project" value="UniProtKB-UniRule"/>
</dbReference>
<dbReference type="GO" id="GO:0043335">
    <property type="term" value="P:protein unfolding"/>
    <property type="evidence" value="ECO:0007669"/>
    <property type="project" value="UniProtKB-UniRule"/>
</dbReference>
<dbReference type="GO" id="GO:0051603">
    <property type="term" value="P:proteolysis involved in protein catabolic process"/>
    <property type="evidence" value="ECO:0007669"/>
    <property type="project" value="TreeGrafter"/>
</dbReference>
<dbReference type="CDD" id="cd19498">
    <property type="entry name" value="RecA-like_HslU"/>
    <property type="match status" value="1"/>
</dbReference>
<dbReference type="FunFam" id="1.10.8.10:FF:000028">
    <property type="entry name" value="ATP-dependent protease ATPase subunit HslU"/>
    <property type="match status" value="2"/>
</dbReference>
<dbReference type="FunFam" id="1.10.8.60:FF:000027">
    <property type="entry name" value="ATP-dependent protease ATPase subunit HslU"/>
    <property type="match status" value="1"/>
</dbReference>
<dbReference type="FunFam" id="3.40.50.300:FF:000213">
    <property type="entry name" value="ATP-dependent protease ATPase subunit HslU"/>
    <property type="match status" value="1"/>
</dbReference>
<dbReference type="FunFam" id="3.40.50.300:FF:000220">
    <property type="entry name" value="ATP-dependent protease ATPase subunit HslU"/>
    <property type="match status" value="1"/>
</dbReference>
<dbReference type="Gene3D" id="1.10.8.60">
    <property type="match status" value="1"/>
</dbReference>
<dbReference type="Gene3D" id="1.10.8.10">
    <property type="entry name" value="DNA helicase RuvA subunit, C-terminal domain"/>
    <property type="match status" value="1"/>
</dbReference>
<dbReference type="Gene3D" id="3.40.50.300">
    <property type="entry name" value="P-loop containing nucleotide triphosphate hydrolases"/>
    <property type="match status" value="2"/>
</dbReference>
<dbReference type="HAMAP" id="MF_00249">
    <property type="entry name" value="HslU"/>
    <property type="match status" value="1"/>
</dbReference>
<dbReference type="InterPro" id="IPR003593">
    <property type="entry name" value="AAA+_ATPase"/>
</dbReference>
<dbReference type="InterPro" id="IPR050052">
    <property type="entry name" value="ATP-dep_Clp_protease_ClpX"/>
</dbReference>
<dbReference type="InterPro" id="IPR003959">
    <property type="entry name" value="ATPase_AAA_core"/>
</dbReference>
<dbReference type="InterPro" id="IPR019489">
    <property type="entry name" value="Clp_ATPase_C"/>
</dbReference>
<dbReference type="InterPro" id="IPR004491">
    <property type="entry name" value="HslU"/>
</dbReference>
<dbReference type="InterPro" id="IPR027417">
    <property type="entry name" value="P-loop_NTPase"/>
</dbReference>
<dbReference type="NCBIfam" id="TIGR00390">
    <property type="entry name" value="hslU"/>
    <property type="match status" value="1"/>
</dbReference>
<dbReference type="NCBIfam" id="NF003544">
    <property type="entry name" value="PRK05201.1"/>
    <property type="match status" value="1"/>
</dbReference>
<dbReference type="PANTHER" id="PTHR48102">
    <property type="entry name" value="ATP-DEPENDENT CLP PROTEASE ATP-BINDING SUBUNIT CLPX-LIKE, MITOCHONDRIAL-RELATED"/>
    <property type="match status" value="1"/>
</dbReference>
<dbReference type="PANTHER" id="PTHR48102:SF3">
    <property type="entry name" value="ATP-DEPENDENT PROTEASE ATPASE SUBUNIT HSLU"/>
    <property type="match status" value="1"/>
</dbReference>
<dbReference type="Pfam" id="PF00004">
    <property type="entry name" value="AAA"/>
    <property type="match status" value="1"/>
</dbReference>
<dbReference type="Pfam" id="PF07724">
    <property type="entry name" value="AAA_2"/>
    <property type="match status" value="1"/>
</dbReference>
<dbReference type="SMART" id="SM00382">
    <property type="entry name" value="AAA"/>
    <property type="match status" value="1"/>
</dbReference>
<dbReference type="SMART" id="SM01086">
    <property type="entry name" value="ClpB_D2-small"/>
    <property type="match status" value="1"/>
</dbReference>
<dbReference type="SUPFAM" id="SSF52540">
    <property type="entry name" value="P-loop containing nucleoside triphosphate hydrolases"/>
    <property type="match status" value="1"/>
</dbReference>
<comment type="function">
    <text evidence="1">ATPase subunit of a proteasome-like degradation complex; this subunit has chaperone activity. The binding of ATP and its subsequent hydrolysis by HslU are essential for unfolding of protein substrates subsequently hydrolyzed by HslV. HslU recognizes the N-terminal part of its protein substrates and unfolds these before they are guided to HslV for hydrolysis.</text>
</comment>
<comment type="subunit">
    <text evidence="1">A double ring-shaped homohexamer of HslV is capped on each side by a ring-shaped HslU homohexamer. The assembly of the HslU/HslV complex is dependent on binding of ATP.</text>
</comment>
<comment type="subcellular location">
    <subcellularLocation>
        <location evidence="1">Cytoplasm</location>
    </subcellularLocation>
</comment>
<comment type="similarity">
    <text evidence="1">Belongs to the ClpX chaperone family. HslU subfamily.</text>
</comment>
<feature type="chain" id="PRO_0000160529" description="ATP-dependent protease ATPase subunit HslU">
    <location>
        <begin position="1"/>
        <end position="443"/>
    </location>
</feature>
<feature type="binding site" evidence="1">
    <location>
        <position position="18"/>
    </location>
    <ligand>
        <name>ATP</name>
        <dbReference type="ChEBI" id="CHEBI:30616"/>
    </ligand>
</feature>
<feature type="binding site" evidence="1">
    <location>
        <begin position="60"/>
        <end position="65"/>
    </location>
    <ligand>
        <name>ATP</name>
        <dbReference type="ChEBI" id="CHEBI:30616"/>
    </ligand>
</feature>
<feature type="binding site" evidence="1">
    <location>
        <position position="256"/>
    </location>
    <ligand>
        <name>ATP</name>
        <dbReference type="ChEBI" id="CHEBI:30616"/>
    </ligand>
</feature>
<feature type="binding site" evidence="1">
    <location>
        <position position="321"/>
    </location>
    <ligand>
        <name>ATP</name>
        <dbReference type="ChEBI" id="CHEBI:30616"/>
    </ligand>
</feature>
<feature type="binding site" evidence="1">
    <location>
        <position position="393"/>
    </location>
    <ligand>
        <name>ATP</name>
        <dbReference type="ChEBI" id="CHEBI:30616"/>
    </ligand>
</feature>
<name>HSLU_PHOLL</name>
<reference key="1">
    <citation type="journal article" date="2003" name="Nat. Biotechnol.">
        <title>The genome sequence of the entomopathogenic bacterium Photorhabdus luminescens.</title>
        <authorList>
            <person name="Duchaud E."/>
            <person name="Rusniok C."/>
            <person name="Frangeul L."/>
            <person name="Buchrieser C."/>
            <person name="Givaudan A."/>
            <person name="Taourit S."/>
            <person name="Bocs S."/>
            <person name="Boursaux-Eude C."/>
            <person name="Chandler M."/>
            <person name="Charles J.-F."/>
            <person name="Dassa E."/>
            <person name="Derose R."/>
            <person name="Derzelle S."/>
            <person name="Freyssinet G."/>
            <person name="Gaudriault S."/>
            <person name="Medigue C."/>
            <person name="Lanois A."/>
            <person name="Powell K."/>
            <person name="Siguier P."/>
            <person name="Vincent R."/>
            <person name="Wingate V."/>
            <person name="Zouine M."/>
            <person name="Glaser P."/>
            <person name="Boemare N."/>
            <person name="Danchin A."/>
            <person name="Kunst F."/>
        </authorList>
    </citation>
    <scope>NUCLEOTIDE SEQUENCE [LARGE SCALE GENOMIC DNA]</scope>
    <source>
        <strain>DSM 15139 / CIP 105565 / TT01</strain>
    </source>
</reference>
<sequence length="443" mass="49894">MSEMTPREIVSELDKHIIGQDKAKRAVAIALRNRWRRMQLDETLRYEVTPKNILMIGPTGVGKTEIARRLAKLANAPFIKVEATKFTEVGYVGKEVDSIIRDLTDAAVKMVRLQSIEQNRYRAEELAEERILDVLIPPAKNNWGQTETQVEPSAARQAFRKKLREGQLDDKEIEIDVATTPVGVEIMAPPGMEEMTNQLQSMFQNLAGQKHKSRKLKIKDAFKLLIEEEASKLVNPEELKQQAIDSVEQHGIVFIDEIDKICKRGQTSGPDVSREGVQRDLLPLVEGCTVSTKHGMVKTDHILFIASGAFQVASPSDLIPELQGRLPIRVELQALTTKDFERILTEPSASLTEQYKALMETEGMIISFTDDGISKIAESAWQVNESTENIGARRLHTVLERLIEDISFEASERRGQSVDIDADYVKKHLDELVADEDLSRFIL</sequence>
<organism>
    <name type="scientific">Photorhabdus laumondii subsp. laumondii (strain DSM 15139 / CIP 105565 / TT01)</name>
    <name type="common">Photorhabdus luminescens subsp. laumondii</name>
    <dbReference type="NCBI Taxonomy" id="243265"/>
    <lineage>
        <taxon>Bacteria</taxon>
        <taxon>Pseudomonadati</taxon>
        <taxon>Pseudomonadota</taxon>
        <taxon>Gammaproteobacteria</taxon>
        <taxon>Enterobacterales</taxon>
        <taxon>Morganellaceae</taxon>
        <taxon>Photorhabdus</taxon>
    </lineage>
</organism>
<protein>
    <recommendedName>
        <fullName evidence="1">ATP-dependent protease ATPase subunit HslU</fullName>
    </recommendedName>
    <alternativeName>
        <fullName evidence="1">Unfoldase HslU</fullName>
    </alternativeName>
</protein>
<gene>
    <name evidence="1" type="primary">hslU</name>
    <name type="ordered locus">plu4763</name>
</gene>
<keyword id="KW-0067">ATP-binding</keyword>
<keyword id="KW-0143">Chaperone</keyword>
<keyword id="KW-0963">Cytoplasm</keyword>
<keyword id="KW-0547">Nucleotide-binding</keyword>
<keyword id="KW-1185">Reference proteome</keyword>
<evidence type="ECO:0000255" key="1">
    <source>
        <dbReference type="HAMAP-Rule" id="MF_00249"/>
    </source>
</evidence>